<sequence>MKVADMQDQLVCHGCRNLLMYPRGASNVRCALCNTINMVPPPPPPHDMAHIICGGCRTMLMYTRGASSVRCSCCQTTNLVPAHSNQVAHAPSSQVAQINCGHCRTTLMYPYGASSVKCAVCQFVTNVNMSNGRVPLPTNRPNGTACPPSTSTSTPPSQTQTVVVENPMSVDESGKLVSNVVVGVTTDKK</sequence>
<name>LSD1_ARATH</name>
<comment type="function">
    <text evidence="3 4 5 6 7 9 10 11 12 13">Negative regulator of reactive oxygen-induced cell death, cold stress-induced cell death, pathogen-induced hypersensitive response (HR), basal disease resistance. May be involved in the induction of the copper/zinc superoxide dismutase CSD1 and CSD2 that detoxify accumulating superoxide before the reactive oxygen species (ROS) can trigger a cell death cascade. LSD1 and LOL1 have antagonistic effects on CSD1 and CSD2 accumulation to regulate oxidative stress-induced cell death. Antagonizes the function of BZIP10, a positive regulator of cell death, by interacting in the cytoplasm and preventing its nuclear localization. Controls lysigenous aerenchyma in hypocotyls under root hypoxia. Required for leaf acclimation in response to excess excitation energy.</text>
</comment>
<comment type="subunit">
    <text evidence="8 9 13 14 16">Interacts with BZIP10 and AMC1 (via N-terminus). Binds to BZIP63. Interacts with CAT1, CAT2 and CAT3 in a zinc-finger-dependent manner (PubMed:23958864). Interacts (via N-terminus) with GILP (PubMed:21526181).</text>
</comment>
<comment type="interaction">
    <interactant intactId="EBI-5849461">
        <id>P94077</id>
    </interactant>
    <interactant intactId="EBI-5849501">
        <id>Q7XJE6</id>
        <label>AMC1</label>
    </interactant>
    <organismsDiffer>false</organismsDiffer>
    <experiments>3</experiments>
</comment>
<comment type="interaction">
    <interactant intactId="EBI-5849461">
        <id>P94077</id>
    </interactant>
    <interactant intactId="EBI-15191535">
        <id>O80748</id>
        <label>BBX26</label>
    </interactant>
    <organismsDiffer>false</organismsDiffer>
    <experiments>3</experiments>
</comment>
<comment type="interaction">
    <interactant intactId="EBI-5849461">
        <id>P94077</id>
    </interactant>
    <interactant intactId="EBI-2265428">
        <id>Q8S944</id>
        <label>DRP3A</label>
    </interactant>
    <organismsDiffer>false</organismsDiffer>
    <experiments>7</experiments>
</comment>
<comment type="interaction">
    <interactant intactId="EBI-5849461">
        <id>P94077</id>
    </interactant>
    <interactant intactId="EBI-2265511">
        <id>Q8LFT2</id>
        <label>DRP3B</label>
    </interactant>
    <organismsDiffer>false</organismsDiffer>
    <experiments>3</experiments>
</comment>
<comment type="interaction">
    <interactant intactId="EBI-5849461">
        <id>P94077</id>
    </interactant>
    <interactant intactId="EBI-4446727">
        <id>Q94ID6</id>
        <label>ERF12</label>
    </interactant>
    <organismsDiffer>false</organismsDiffer>
    <experiments>3</experiments>
</comment>
<comment type="interaction">
    <interactant intactId="EBI-5849461">
        <id>P94077</id>
    </interactant>
    <interactant intactId="EBI-6274018">
        <id>Q94CD4</id>
        <label>GILP</label>
    </interactant>
    <organismsDiffer>false</organismsDiffer>
    <experiments>3</experiments>
</comment>
<comment type="interaction">
    <interactant intactId="EBI-5849461">
        <id>P94077</id>
    </interactant>
    <interactant intactId="EBI-15191571">
        <id>Q4PSE2</id>
        <label>NFYC8</label>
    </interactant>
    <organismsDiffer>false</organismsDiffer>
    <experiments>4</experiments>
</comment>
<comment type="interaction">
    <interactant intactId="EBI-5849461">
        <id>P94077</id>
    </interactant>
    <interactant intactId="EBI-2466050">
        <id>Q8L4B2</id>
        <label>NFYC9</label>
    </interactant>
    <organismsDiffer>false</organismsDiffer>
    <experiments>4</experiments>
</comment>
<comment type="interaction">
    <interactant intactId="EBI-5849461">
        <id>P94077</id>
    </interactant>
    <interactant intactId="EBI-15195055">
        <id>Q9FNN6</id>
        <label>SRM1</label>
    </interactant>
    <organismsDiffer>false</organismsDiffer>
    <experiments>5</experiments>
</comment>
<comment type="interaction">
    <interactant intactId="EBI-5849461">
        <id>P94077</id>
    </interactant>
    <interactant intactId="EBI-6956003">
        <id>Q8W245</id>
        <label>ZIP10</label>
    </interactant>
    <organismsDiffer>false</organismsDiffer>
    <experiments>3</experiments>
</comment>
<comment type="subcellular location">
    <subcellularLocation>
        <location evidence="9">Cytoplasm</location>
    </subcellularLocation>
    <subcellularLocation>
        <location evidence="9">Nucleus</location>
    </subcellularLocation>
</comment>
<comment type="alternative products">
    <event type="alternative splicing"/>
    <isoform>
        <id>P94077-1</id>
        <name>1</name>
        <sequence type="displayed"/>
    </isoform>
    <isoform>
        <id>P94077-2</id>
        <name>2</name>
        <sequence type="described" ref="VSP_041104"/>
    </isoform>
</comment>
<comment type="tissue specificity">
    <text evidence="12">Expressed in cotyledons, roots, rosette leaves, stems, inflorescences and flowers.</text>
</comment>
<comment type="induction">
    <text evidence="12">By methyl viologen.</text>
</comment>
<comment type="disruption phenotype">
    <text evidence="5 12">No visible phenotype under normal growth condition, however cold treatment induces the development of yellowish leaves with necrosis, and treatment with salicylic acid or infection with avirulent pathogen causes a runaway cell death and plant death.</text>
</comment>
<comment type="miscellaneous">
    <text evidence="15">When expressed in Arabidopsis, Pisum sativa LSD1 interacts with importin alpha via the LSD1-type zinc finger motifs, suggesting that the nuclear import of LSD1 may rely on the interaction between its zinc finger motifs and importin alpha.</text>
</comment>
<comment type="sequence caution" evidence="20">
    <conflict type="miscellaneous discrepancy">
        <sequence resource="EMBL-CDS" id="BAH57095"/>
    </conflict>
    <text>Intron retention.</text>
</comment>
<keyword id="KW-0025">Alternative splicing</keyword>
<keyword id="KW-0053">Apoptosis</keyword>
<keyword id="KW-0963">Cytoplasm</keyword>
<keyword id="KW-0381">Hypersensitive response</keyword>
<keyword id="KW-0539">Nucleus</keyword>
<keyword id="KW-0611">Plant defense</keyword>
<keyword id="KW-1185">Reference proteome</keyword>
<reference key="1">
    <citation type="journal article" date="1997" name="Cell">
        <title>A novel zinc finger protein is encoded by the Arabidopsis LSD1 gene and functions as a negative regulator of plant cell death.</title>
        <authorList>
            <person name="Dietrich R.A."/>
            <person name="Richberg M.H."/>
            <person name="Schmidt R."/>
            <person name="Dean C."/>
            <person name="Dangl J.L."/>
        </authorList>
    </citation>
    <scope>NUCLEOTIDE SEQUENCE [GENOMIC DNA / MRNA] (ISOFORM 1)</scope>
    <source>
        <strain>cv. Wassilewskija</strain>
    </source>
</reference>
<reference key="2">
    <citation type="journal article" date="1999" name="Nature">
        <title>Sequence and analysis of chromosome 4 of the plant Arabidopsis thaliana.</title>
        <authorList>
            <person name="Mayer K.F.X."/>
            <person name="Schueller C."/>
            <person name="Wambutt R."/>
            <person name="Murphy G."/>
            <person name="Volckaert G."/>
            <person name="Pohl T."/>
            <person name="Duesterhoeft A."/>
            <person name="Stiekema W."/>
            <person name="Entian K.-D."/>
            <person name="Terryn N."/>
            <person name="Harris B."/>
            <person name="Ansorge W."/>
            <person name="Brandt P."/>
            <person name="Grivell L.A."/>
            <person name="Rieger M."/>
            <person name="Weichselgartner M."/>
            <person name="de Simone V."/>
            <person name="Obermaier B."/>
            <person name="Mache R."/>
            <person name="Mueller M."/>
            <person name="Kreis M."/>
            <person name="Delseny M."/>
            <person name="Puigdomenech P."/>
            <person name="Watson M."/>
            <person name="Schmidtheini T."/>
            <person name="Reichert B."/>
            <person name="Portetelle D."/>
            <person name="Perez-Alonso M."/>
            <person name="Boutry M."/>
            <person name="Bancroft I."/>
            <person name="Vos P."/>
            <person name="Hoheisel J."/>
            <person name="Zimmermann W."/>
            <person name="Wedler H."/>
            <person name="Ridley P."/>
            <person name="Langham S.-A."/>
            <person name="McCullagh B."/>
            <person name="Bilham L."/>
            <person name="Robben J."/>
            <person name="van der Schueren J."/>
            <person name="Grymonprez B."/>
            <person name="Chuang Y.-J."/>
            <person name="Vandenbussche F."/>
            <person name="Braeken M."/>
            <person name="Weltjens I."/>
            <person name="Voet M."/>
            <person name="Bastiaens I."/>
            <person name="Aert R."/>
            <person name="Defoor E."/>
            <person name="Weitzenegger T."/>
            <person name="Bothe G."/>
            <person name="Ramsperger U."/>
            <person name="Hilbert H."/>
            <person name="Braun M."/>
            <person name="Holzer E."/>
            <person name="Brandt A."/>
            <person name="Peters S."/>
            <person name="van Staveren M."/>
            <person name="Dirkse W."/>
            <person name="Mooijman P."/>
            <person name="Klein Lankhorst R."/>
            <person name="Rose M."/>
            <person name="Hauf J."/>
            <person name="Koetter P."/>
            <person name="Berneiser S."/>
            <person name="Hempel S."/>
            <person name="Feldpausch M."/>
            <person name="Lamberth S."/>
            <person name="Van den Daele H."/>
            <person name="De Keyser A."/>
            <person name="Buysshaert C."/>
            <person name="Gielen J."/>
            <person name="Villarroel R."/>
            <person name="De Clercq R."/>
            <person name="van Montagu M."/>
            <person name="Rogers J."/>
            <person name="Cronin A."/>
            <person name="Quail M.A."/>
            <person name="Bray-Allen S."/>
            <person name="Clark L."/>
            <person name="Doggett J."/>
            <person name="Hall S."/>
            <person name="Kay M."/>
            <person name="Lennard N."/>
            <person name="McLay K."/>
            <person name="Mayes R."/>
            <person name="Pettett A."/>
            <person name="Rajandream M.A."/>
            <person name="Lyne M."/>
            <person name="Benes V."/>
            <person name="Rechmann S."/>
            <person name="Borkova D."/>
            <person name="Bloecker H."/>
            <person name="Scharfe M."/>
            <person name="Grimm M."/>
            <person name="Loehnert T.-H."/>
            <person name="Dose S."/>
            <person name="de Haan M."/>
            <person name="Maarse A.C."/>
            <person name="Schaefer M."/>
            <person name="Mueller-Auer S."/>
            <person name="Gabel C."/>
            <person name="Fuchs M."/>
            <person name="Fartmann B."/>
            <person name="Granderath K."/>
            <person name="Dauner D."/>
            <person name="Herzl A."/>
            <person name="Neumann S."/>
            <person name="Argiriou A."/>
            <person name="Vitale D."/>
            <person name="Liguori R."/>
            <person name="Piravandi E."/>
            <person name="Massenet O."/>
            <person name="Quigley F."/>
            <person name="Clabauld G."/>
            <person name="Muendlein A."/>
            <person name="Felber R."/>
            <person name="Schnabl S."/>
            <person name="Hiller R."/>
            <person name="Schmidt W."/>
            <person name="Lecharny A."/>
            <person name="Aubourg S."/>
            <person name="Chefdor F."/>
            <person name="Cooke R."/>
            <person name="Berger C."/>
            <person name="Monfort A."/>
            <person name="Casacuberta E."/>
            <person name="Gibbons T."/>
            <person name="Weber N."/>
            <person name="Vandenbol M."/>
            <person name="Bargues M."/>
            <person name="Terol J."/>
            <person name="Torres A."/>
            <person name="Perez-Perez A."/>
            <person name="Purnelle B."/>
            <person name="Bent E."/>
            <person name="Johnson S."/>
            <person name="Tacon D."/>
            <person name="Jesse T."/>
            <person name="Heijnen L."/>
            <person name="Schwarz S."/>
            <person name="Scholler P."/>
            <person name="Heber S."/>
            <person name="Francs P."/>
            <person name="Bielke C."/>
            <person name="Frishman D."/>
            <person name="Haase D."/>
            <person name="Lemcke K."/>
            <person name="Mewes H.-W."/>
            <person name="Stocker S."/>
            <person name="Zaccaria P."/>
            <person name="Bevan M."/>
            <person name="Wilson R.K."/>
            <person name="de la Bastide M."/>
            <person name="Habermann K."/>
            <person name="Parnell L."/>
            <person name="Dedhia N."/>
            <person name="Gnoj L."/>
            <person name="Schutz K."/>
            <person name="Huang E."/>
            <person name="Spiegel L."/>
            <person name="Sekhon M."/>
            <person name="Murray J."/>
            <person name="Sheet P."/>
            <person name="Cordes M."/>
            <person name="Abu-Threideh J."/>
            <person name="Stoneking T."/>
            <person name="Kalicki J."/>
            <person name="Graves T."/>
            <person name="Harmon G."/>
            <person name="Edwards J."/>
            <person name="Latreille P."/>
            <person name="Courtney L."/>
            <person name="Cloud J."/>
            <person name="Abbott A."/>
            <person name="Scott K."/>
            <person name="Johnson D."/>
            <person name="Minx P."/>
            <person name="Bentley D."/>
            <person name="Fulton B."/>
            <person name="Miller N."/>
            <person name="Greco T."/>
            <person name="Kemp K."/>
            <person name="Kramer J."/>
            <person name="Fulton L."/>
            <person name="Mardis E."/>
            <person name="Dante M."/>
            <person name="Pepin K."/>
            <person name="Hillier L.W."/>
            <person name="Nelson J."/>
            <person name="Spieth J."/>
            <person name="Ryan E."/>
            <person name="Andrews S."/>
            <person name="Geisel C."/>
            <person name="Layman D."/>
            <person name="Du H."/>
            <person name="Ali J."/>
            <person name="Berghoff A."/>
            <person name="Jones K."/>
            <person name="Drone K."/>
            <person name="Cotton M."/>
            <person name="Joshu C."/>
            <person name="Antonoiu B."/>
            <person name="Zidanic M."/>
            <person name="Strong C."/>
            <person name="Sun H."/>
            <person name="Lamar B."/>
            <person name="Yordan C."/>
            <person name="Ma P."/>
            <person name="Zhong J."/>
            <person name="Preston R."/>
            <person name="Vil D."/>
            <person name="Shekher M."/>
            <person name="Matero A."/>
            <person name="Shah R."/>
            <person name="Swaby I.K."/>
            <person name="O'Shaughnessy A."/>
            <person name="Rodriguez M."/>
            <person name="Hoffman J."/>
            <person name="Till S."/>
            <person name="Granat S."/>
            <person name="Shohdy N."/>
            <person name="Hasegawa A."/>
            <person name="Hameed A."/>
            <person name="Lodhi M."/>
            <person name="Johnson A."/>
            <person name="Chen E."/>
            <person name="Marra M.A."/>
            <person name="Martienssen R."/>
            <person name="McCombie W.R."/>
        </authorList>
    </citation>
    <scope>NUCLEOTIDE SEQUENCE [LARGE SCALE GENOMIC DNA]</scope>
    <source>
        <strain>cv. Columbia</strain>
    </source>
</reference>
<reference key="3">
    <citation type="journal article" date="2017" name="Plant J.">
        <title>Araport11: a complete reannotation of the Arabidopsis thaliana reference genome.</title>
        <authorList>
            <person name="Cheng C.Y."/>
            <person name="Krishnakumar V."/>
            <person name="Chan A.P."/>
            <person name="Thibaud-Nissen F."/>
            <person name="Schobel S."/>
            <person name="Town C.D."/>
        </authorList>
    </citation>
    <scope>GENOME REANNOTATION</scope>
    <source>
        <strain>cv. Columbia</strain>
    </source>
</reference>
<reference key="4">
    <citation type="journal article" date="2003" name="Science">
        <title>Empirical analysis of transcriptional activity in the Arabidopsis genome.</title>
        <authorList>
            <person name="Yamada K."/>
            <person name="Lim J."/>
            <person name="Dale J.M."/>
            <person name="Chen H."/>
            <person name="Shinn P."/>
            <person name="Palm C.J."/>
            <person name="Southwick A.M."/>
            <person name="Wu H.C."/>
            <person name="Kim C.J."/>
            <person name="Nguyen M."/>
            <person name="Pham P.K."/>
            <person name="Cheuk R.F."/>
            <person name="Karlin-Newmann G."/>
            <person name="Liu S.X."/>
            <person name="Lam B."/>
            <person name="Sakano H."/>
            <person name="Wu T."/>
            <person name="Yu G."/>
            <person name="Miranda M."/>
            <person name="Quach H.L."/>
            <person name="Tripp M."/>
            <person name="Chang C.H."/>
            <person name="Lee J.M."/>
            <person name="Toriumi M.J."/>
            <person name="Chan M.M."/>
            <person name="Tang C.C."/>
            <person name="Onodera C.S."/>
            <person name="Deng J.M."/>
            <person name="Akiyama K."/>
            <person name="Ansari Y."/>
            <person name="Arakawa T."/>
            <person name="Banh J."/>
            <person name="Banno F."/>
            <person name="Bowser L."/>
            <person name="Brooks S.Y."/>
            <person name="Carninci P."/>
            <person name="Chao Q."/>
            <person name="Choy N."/>
            <person name="Enju A."/>
            <person name="Goldsmith A.D."/>
            <person name="Gurjal M."/>
            <person name="Hansen N.F."/>
            <person name="Hayashizaki Y."/>
            <person name="Johnson-Hopson C."/>
            <person name="Hsuan V.W."/>
            <person name="Iida K."/>
            <person name="Karnes M."/>
            <person name="Khan S."/>
            <person name="Koesema E."/>
            <person name="Ishida J."/>
            <person name="Jiang P.X."/>
            <person name="Jones T."/>
            <person name="Kawai J."/>
            <person name="Kamiya A."/>
            <person name="Meyers C."/>
            <person name="Nakajima M."/>
            <person name="Narusaka M."/>
            <person name="Seki M."/>
            <person name="Sakurai T."/>
            <person name="Satou M."/>
            <person name="Tamse R."/>
            <person name="Vaysberg M."/>
            <person name="Wallender E.K."/>
            <person name="Wong C."/>
            <person name="Yamamura Y."/>
            <person name="Yuan S."/>
            <person name="Shinozaki K."/>
            <person name="Davis R.W."/>
            <person name="Theologis A."/>
            <person name="Ecker J.R."/>
        </authorList>
    </citation>
    <scope>NUCLEOTIDE SEQUENCE [LARGE SCALE MRNA] (ISOFORM 2)</scope>
    <source>
        <strain>cv. Columbia</strain>
    </source>
</reference>
<reference key="5">
    <citation type="journal article" date="2009" name="DNA Res.">
        <title>Analysis of multiple occurrences of alternative splicing events in Arabidopsis thaliana using novel sequenced full-length cDNAs.</title>
        <authorList>
            <person name="Iida K."/>
            <person name="Fukami-Kobayashi K."/>
            <person name="Toyoda A."/>
            <person name="Sakaki Y."/>
            <person name="Kobayashi M."/>
            <person name="Seki M."/>
            <person name="Shinozaki K."/>
        </authorList>
    </citation>
    <scope>NUCLEOTIDE SEQUENCE [LARGE SCALE MRNA] (ISOFORM 2)</scope>
    <source>
        <strain>cv. Columbia</strain>
        <tissue>Rosette leaf</tissue>
    </source>
</reference>
<reference key="6">
    <citation type="submission" date="2002-03" db="EMBL/GenBank/DDBJ databases">
        <title>Full-length cDNA from Arabidopsis thaliana.</title>
        <authorList>
            <person name="Brover V.V."/>
            <person name="Troukhan M.E."/>
            <person name="Alexandrov N.A."/>
            <person name="Lu Y.-P."/>
            <person name="Flavell R.B."/>
            <person name="Feldmann K.A."/>
        </authorList>
    </citation>
    <scope>NUCLEOTIDE SEQUENCE [LARGE SCALE MRNA] (ISOFORM 2)</scope>
</reference>
<reference key="7">
    <citation type="journal article" date="1999" name="Mol. Plant Microbe Interact.">
        <title>LSD1 regulates salicylic acid induction of copper zinc superoxide dismutase in Arabidopsis thaliana.</title>
        <authorList>
            <person name="Kliebenstein D.J."/>
            <person name="Dietrich R.A."/>
            <person name="Martin A.C."/>
            <person name="Last R.L."/>
            <person name="Dangl J.L."/>
        </authorList>
    </citation>
    <scope>FUNCTION</scope>
    <source>
        <strain>cv. Wassilewskija</strain>
    </source>
</reference>
<reference key="8">
    <citation type="journal article" date="2001" name="Plant Cell">
        <title>The disease resistance signaling components EDS1 and PAD4 are essential regulators of the cell death pathway controlled by LSD1 in Arabidopsis.</title>
        <authorList>
            <person name="Rusterucci C."/>
            <person name="Aviv D.H."/>
            <person name="Holt B.F. III"/>
            <person name="Dangl J.L."/>
            <person name="Parker J.E."/>
        </authorList>
    </citation>
    <scope>FUNCTION</scope>
    <source>
        <strain>cv. Wassilewskija</strain>
    </source>
</reference>
<reference key="9">
    <citation type="journal article" date="2002" name="Plant J.">
        <title>Runaway cell death, but not basal disease resistance, in lsd1 is SA- and NIM1/NPR1-dependent.</title>
        <authorList>
            <person name="Aviv D.H."/>
            <person name="Rusterucci C."/>
            <person name="Holt B.F. III"/>
            <person name="Dietrich R.A."/>
            <person name="Parker J.E."/>
            <person name="Dangl J.L."/>
        </authorList>
    </citation>
    <scope>FUNCTION</scope>
    <scope>DISRUPTION PHENOTYPE</scope>
    <source>
        <strain>cv. Wassilewskija</strain>
    </source>
</reference>
<reference key="10">
    <citation type="journal article" date="2003" name="Proc. Natl. Acad. Sci. U.S.A.">
        <title>Antagonistic control of oxidative stress-induced cell death in Arabidopsis by two related, plant-specific zinc finger proteins.</title>
        <authorList>
            <person name="Epple P."/>
            <person name="Mack A.A."/>
            <person name="Morris V.R."/>
            <person name="Dangl J.L."/>
        </authorList>
    </citation>
    <scope>FUNCTION</scope>
    <source>
        <strain>cv. Wassilewskija</strain>
    </source>
</reference>
<reference key="11">
    <citation type="journal article" date="2004" name="Plant J.">
        <title>Visualization of protein interactions in living plant cells using bimolecular fluorescence complementation.</title>
        <authorList>
            <person name="Walter M."/>
            <person name="Chaban C."/>
            <person name="Schuetze K."/>
            <person name="Batistic O."/>
            <person name="Weckermann K."/>
            <person name="Naeke C."/>
            <person name="Blazevic D."/>
            <person name="Grefen C."/>
            <person name="Schumacher K."/>
            <person name="Oecking C."/>
            <person name="Harter K."/>
            <person name="Kudla J."/>
        </authorList>
    </citation>
    <scope>INTERACTION WITH BZIP63</scope>
</reference>
<reference key="12">
    <citation type="journal article" date="2004" name="Plant Physiol.">
        <title>LESION SIMULATING DISEASE 1 is required for acclimation to conditions that promote excess excitation energy.</title>
        <authorList>
            <person name="Mateo A."/>
            <person name="Muhlenbock P."/>
            <person name="Rusterucci C."/>
            <person name="Chang C.C."/>
            <person name="Miszalski Z."/>
            <person name="Karpinska B."/>
            <person name="Parker J.E."/>
            <person name="Mullineaux P.M."/>
            <person name="Karpinski S."/>
        </authorList>
    </citation>
    <scope>FUNCTION</scope>
</reference>
<reference key="13">
    <citation type="journal article" date="2006" name="EMBO J.">
        <title>bZIP10-LSD1 antagonism modulates basal defense and cell death in Arabidopsis following infection.</title>
        <authorList>
            <person name="Kaminaka H."/>
            <person name="Naeke C."/>
            <person name="Epple P."/>
            <person name="Dittgen J."/>
            <person name="Schuetze K."/>
            <person name="Chaban C."/>
            <person name="Holt B.F. III"/>
            <person name="Merkle T."/>
            <person name="Schaefer E."/>
            <person name="Harter K."/>
            <person name="Dangl J.L."/>
        </authorList>
    </citation>
    <scope>FUNCTION</scope>
    <scope>SUBCELLULAR LOCATION</scope>
    <scope>INTERACTION WITH BZIP10</scope>
</reference>
<reference key="14">
    <citation type="journal article" date="2007" name="Plant Cell">
        <title>Lysigenous aerenchyma formation in Arabidopsis is controlled by LESION SIMULATING DISEASE1.</title>
        <authorList>
            <person name="Muehlenbock P."/>
            <person name="Plaszczyca M."/>
            <person name="Plaszczyca M."/>
            <person name="Mellerowicz E."/>
            <person name="Karpinski S."/>
        </authorList>
    </citation>
    <scope>FUNCTION</scope>
    <source>
        <strain>cv. Wassilewskija</strain>
    </source>
</reference>
<reference key="15">
    <citation type="journal article" date="2008" name="Plant Cell">
        <title>Chloroplast signaling and LESION SIMULATING DISEASE1 regulate crosstalk between light acclimation and immunity in Arabidopsis.</title>
        <authorList>
            <person name="Muehlenbock P."/>
            <person name="Szechynska-Hebda M."/>
            <person name="Plaszczyca M."/>
            <person name="Baudo M."/>
            <person name="Mateo A."/>
            <person name="Mullineaux P.M."/>
            <person name="Parker J.E."/>
            <person name="Karpinska B."/>
            <person name="Karpinski S."/>
        </authorList>
    </citation>
    <scope>FUNCTION</scope>
</reference>
<reference key="16">
    <citation type="journal article" date="2010" name="New Phytol.">
        <title>The Arabidopsis LSD1 gene plays an important role in the regulation of low temperature-dependent cell death.</title>
        <authorList>
            <person name="Huang X."/>
            <person name="Li Y."/>
            <person name="Zhang X."/>
            <person name="Zuo J."/>
            <person name="Yang S."/>
        </authorList>
    </citation>
    <scope>FUNCTION</scope>
    <scope>TISSUE SPECIFICITY</scope>
    <scope>INDUCTION BY METHYL VIOLOGEN</scope>
    <scope>DISRUPTION PHENOTYPE</scope>
</reference>
<reference key="17">
    <citation type="journal article" date="2010" name="Science">
        <title>Arabidopsis type I metacaspases control cell death.</title>
        <authorList>
            <person name="Coll N.S."/>
            <person name="Vercammen D."/>
            <person name="Smidler A."/>
            <person name="Clover C."/>
            <person name="Van Breusegem F."/>
            <person name="Dangl J.L."/>
            <person name="Epple P."/>
        </authorList>
    </citation>
    <scope>FUNCTION</scope>
    <scope>INTERACTION WITH AMC1</scope>
</reference>
<reference key="18">
    <citation type="journal article" date="2011" name="PLoS ONE">
        <title>The LSD1-interacting protein GILP is a LITAF domain protein that negatively regulates hypersensitive cell death in Arabidopsis.</title>
        <authorList>
            <person name="He S."/>
            <person name="Tan G."/>
            <person name="Liu Q."/>
            <person name="Huang K."/>
            <person name="Ren J."/>
            <person name="Zhang X."/>
            <person name="Yu X."/>
            <person name="Huang P."/>
            <person name="An C."/>
        </authorList>
    </citation>
    <scope>INTERACTION WITH GILP</scope>
</reference>
<reference key="19">
    <citation type="journal article" date="2011" name="PLoS ONE">
        <title>The LSD1-type zinc finger motifs of Pisum sativa LSD1 are a novel nuclear localization signal and interact with importin alpha.</title>
        <authorList>
            <person name="He S."/>
            <person name="Huang K."/>
            <person name="Zhang X."/>
            <person name="Yu X."/>
            <person name="Huang P."/>
            <person name="An C."/>
        </authorList>
    </citation>
    <scope>MISCELLANEOUS</scope>
</reference>
<reference key="20">
    <citation type="journal article" date="2013" name="Plant Physiol.">
        <title>LESION SIMULATING DISEASE1 interacts with catalases to regulate hypersensitive cell death in Arabidopsis.</title>
        <authorList>
            <person name="Li Y."/>
            <person name="Chen L."/>
            <person name="Mu J."/>
            <person name="Zuo J."/>
        </authorList>
    </citation>
    <scope>INTERACTION WITH CAT1; CAT2 AND CAT3</scope>
</reference>
<organism>
    <name type="scientific">Arabidopsis thaliana</name>
    <name type="common">Mouse-ear cress</name>
    <dbReference type="NCBI Taxonomy" id="3702"/>
    <lineage>
        <taxon>Eukaryota</taxon>
        <taxon>Viridiplantae</taxon>
        <taxon>Streptophyta</taxon>
        <taxon>Embryophyta</taxon>
        <taxon>Tracheophyta</taxon>
        <taxon>Spermatophyta</taxon>
        <taxon>Magnoliopsida</taxon>
        <taxon>eudicotyledons</taxon>
        <taxon>Gunneridae</taxon>
        <taxon>Pentapetalae</taxon>
        <taxon>rosids</taxon>
        <taxon>malvids</taxon>
        <taxon>Brassicales</taxon>
        <taxon>Brassicaceae</taxon>
        <taxon>Camelineae</taxon>
        <taxon>Arabidopsis</taxon>
    </lineage>
</organism>
<proteinExistence type="evidence at protein level"/>
<dbReference type="EMBL" id="U87833">
    <property type="protein sequence ID" value="AAC49660.1"/>
    <property type="molecule type" value="mRNA"/>
</dbReference>
<dbReference type="EMBL" id="U87834">
    <property type="protein sequence ID" value="AAC49661.1"/>
    <property type="molecule type" value="Genomic_DNA"/>
</dbReference>
<dbReference type="EMBL" id="AL080253">
    <property type="protein sequence ID" value="CAB45804.1"/>
    <property type="molecule type" value="Genomic_DNA"/>
</dbReference>
<dbReference type="EMBL" id="AL161553">
    <property type="protein sequence ID" value="CAB79038.1"/>
    <property type="molecule type" value="Genomic_DNA"/>
</dbReference>
<dbReference type="EMBL" id="CP002687">
    <property type="protein sequence ID" value="AEE84315.1"/>
    <property type="molecule type" value="Genomic_DNA"/>
</dbReference>
<dbReference type="EMBL" id="CP002687">
    <property type="protein sequence ID" value="AEE84316.1"/>
    <property type="molecule type" value="Genomic_DNA"/>
</dbReference>
<dbReference type="EMBL" id="CP002687">
    <property type="protein sequence ID" value="AEE84317.1"/>
    <property type="molecule type" value="Genomic_DNA"/>
</dbReference>
<dbReference type="EMBL" id="CP002687">
    <property type="protein sequence ID" value="AEE84318.1"/>
    <property type="molecule type" value="Genomic_DNA"/>
</dbReference>
<dbReference type="EMBL" id="CP002687">
    <property type="protein sequence ID" value="AEE84319.1"/>
    <property type="molecule type" value="Genomic_DNA"/>
</dbReference>
<dbReference type="EMBL" id="CP002687">
    <property type="protein sequence ID" value="AEE84320.1"/>
    <property type="molecule type" value="Genomic_DNA"/>
</dbReference>
<dbReference type="EMBL" id="CP002687">
    <property type="protein sequence ID" value="AEE84321.1"/>
    <property type="molecule type" value="Genomic_DNA"/>
</dbReference>
<dbReference type="EMBL" id="AY080824">
    <property type="protein sequence ID" value="AAL87301.1"/>
    <property type="molecule type" value="mRNA"/>
</dbReference>
<dbReference type="EMBL" id="AY117316">
    <property type="protein sequence ID" value="AAM51391.1"/>
    <property type="molecule type" value="mRNA"/>
</dbReference>
<dbReference type="EMBL" id="AK318980">
    <property type="protein sequence ID" value="BAH57095.1"/>
    <property type="status" value="ALT_SEQ"/>
    <property type="molecule type" value="mRNA"/>
</dbReference>
<dbReference type="EMBL" id="AY087794">
    <property type="protein sequence ID" value="AAM65330.1"/>
    <property type="molecule type" value="mRNA"/>
</dbReference>
<dbReference type="PIR" id="T10580">
    <property type="entry name" value="T10580"/>
</dbReference>
<dbReference type="RefSeq" id="NP_001031678.1">
    <molecule id="P94077-2"/>
    <property type="nucleotide sequence ID" value="NM_001036601.1"/>
</dbReference>
<dbReference type="RefSeq" id="NP_001031679.1">
    <molecule id="P94077-2"/>
    <property type="nucleotide sequence ID" value="NM_001036602.2"/>
</dbReference>
<dbReference type="RefSeq" id="NP_001031680.2">
    <molecule id="P94077-2"/>
    <property type="nucleotide sequence ID" value="NM_001036603.2"/>
</dbReference>
<dbReference type="RefSeq" id="NP_001078413.1">
    <molecule id="P94077-1"/>
    <property type="nucleotide sequence ID" value="NM_001084944.2"/>
</dbReference>
<dbReference type="RefSeq" id="NP_567599.3">
    <molecule id="P94077-2"/>
    <property type="nucleotide sequence ID" value="NM_118157.5"/>
</dbReference>
<dbReference type="RefSeq" id="NP_849548.1">
    <molecule id="P94077-2"/>
    <property type="nucleotide sequence ID" value="NM_179217.4"/>
</dbReference>
<dbReference type="RefSeq" id="NP_849549.1">
    <molecule id="P94077-1"/>
    <property type="nucleotide sequence ID" value="NM_179218.4"/>
</dbReference>
<dbReference type="BioGRID" id="13077">
    <property type="interactions" value="33"/>
</dbReference>
<dbReference type="FunCoup" id="P94077">
    <property type="interactions" value="629"/>
</dbReference>
<dbReference type="IntAct" id="P94077">
    <property type="interactions" value="69"/>
</dbReference>
<dbReference type="MINT" id="P94077"/>
<dbReference type="STRING" id="3702.P94077"/>
<dbReference type="ProteomicsDB" id="238780">
    <molecule id="P94077-1"/>
</dbReference>
<dbReference type="EnsemblPlants" id="AT4G20380.1">
    <molecule id="P94077-2"/>
    <property type="protein sequence ID" value="AT4G20380.1"/>
    <property type="gene ID" value="AT4G20380"/>
</dbReference>
<dbReference type="EnsemblPlants" id="AT4G20380.2">
    <molecule id="P94077-1"/>
    <property type="protein sequence ID" value="AT4G20380.2"/>
    <property type="gene ID" value="AT4G20380"/>
</dbReference>
<dbReference type="EnsemblPlants" id="AT4G20380.3">
    <molecule id="P94077-2"/>
    <property type="protein sequence ID" value="AT4G20380.3"/>
    <property type="gene ID" value="AT4G20380"/>
</dbReference>
<dbReference type="EnsemblPlants" id="AT4G20380.4">
    <molecule id="P94077-2"/>
    <property type="protein sequence ID" value="AT4G20380.4"/>
    <property type="gene ID" value="AT4G20380"/>
</dbReference>
<dbReference type="EnsemblPlants" id="AT4G20380.5">
    <molecule id="P94077-2"/>
    <property type="protein sequence ID" value="AT4G20380.5"/>
    <property type="gene ID" value="AT4G20380"/>
</dbReference>
<dbReference type="EnsemblPlants" id="AT4G20380.6">
    <molecule id="P94077-2"/>
    <property type="protein sequence ID" value="AT4G20380.6"/>
    <property type="gene ID" value="AT4G20380"/>
</dbReference>
<dbReference type="EnsemblPlants" id="AT4G20380.7">
    <molecule id="P94077-1"/>
    <property type="protein sequence ID" value="AT4G20380.7"/>
    <property type="gene ID" value="AT4G20380"/>
</dbReference>
<dbReference type="GeneID" id="827786"/>
<dbReference type="Gramene" id="AT4G20380.1">
    <molecule id="P94077-2"/>
    <property type="protein sequence ID" value="AT4G20380.1"/>
    <property type="gene ID" value="AT4G20380"/>
</dbReference>
<dbReference type="Gramene" id="AT4G20380.2">
    <molecule id="P94077-1"/>
    <property type="protein sequence ID" value="AT4G20380.2"/>
    <property type="gene ID" value="AT4G20380"/>
</dbReference>
<dbReference type="Gramene" id="AT4G20380.3">
    <molecule id="P94077-2"/>
    <property type="protein sequence ID" value="AT4G20380.3"/>
    <property type="gene ID" value="AT4G20380"/>
</dbReference>
<dbReference type="Gramene" id="AT4G20380.4">
    <molecule id="P94077-2"/>
    <property type="protein sequence ID" value="AT4G20380.4"/>
    <property type="gene ID" value="AT4G20380"/>
</dbReference>
<dbReference type="Gramene" id="AT4G20380.5">
    <molecule id="P94077-2"/>
    <property type="protein sequence ID" value="AT4G20380.5"/>
    <property type="gene ID" value="AT4G20380"/>
</dbReference>
<dbReference type="Gramene" id="AT4G20380.6">
    <molecule id="P94077-2"/>
    <property type="protein sequence ID" value="AT4G20380.6"/>
    <property type="gene ID" value="AT4G20380"/>
</dbReference>
<dbReference type="Gramene" id="AT4G20380.7">
    <molecule id="P94077-1"/>
    <property type="protein sequence ID" value="AT4G20380.7"/>
    <property type="gene ID" value="AT4G20380"/>
</dbReference>
<dbReference type="KEGG" id="ath:AT4G20380"/>
<dbReference type="Araport" id="AT4G20380"/>
<dbReference type="TAIR" id="AT4G20380">
    <property type="gene designation" value="LSD1"/>
</dbReference>
<dbReference type="InParanoid" id="P94077"/>
<dbReference type="PhylomeDB" id="P94077"/>
<dbReference type="PRO" id="PR:P94077"/>
<dbReference type="Proteomes" id="UP000006548">
    <property type="component" value="Chromosome 4"/>
</dbReference>
<dbReference type="ExpressionAtlas" id="P94077">
    <property type="expression patterns" value="baseline and differential"/>
</dbReference>
<dbReference type="GO" id="GO:0005737">
    <property type="term" value="C:cytoplasm"/>
    <property type="evidence" value="ECO:0007669"/>
    <property type="project" value="UniProtKB-SubCell"/>
</dbReference>
<dbReference type="GO" id="GO:0005634">
    <property type="term" value="C:nucleus"/>
    <property type="evidence" value="ECO:0007669"/>
    <property type="project" value="UniProtKB-SubCell"/>
</dbReference>
<dbReference type="GO" id="GO:0043069">
    <property type="term" value="P:negative regulation of programmed cell death"/>
    <property type="evidence" value="ECO:0000316"/>
    <property type="project" value="UniProtKB"/>
</dbReference>
<dbReference type="GO" id="GO:0009626">
    <property type="term" value="P:plant-type hypersensitive response"/>
    <property type="evidence" value="ECO:0007669"/>
    <property type="project" value="UniProtKB-KW"/>
</dbReference>
<dbReference type="InterPro" id="IPR040319">
    <property type="entry name" value="LSD1-like"/>
</dbReference>
<dbReference type="InterPro" id="IPR005735">
    <property type="entry name" value="Znf_LSD1"/>
</dbReference>
<dbReference type="NCBIfam" id="TIGR01053">
    <property type="entry name" value="LSD1"/>
    <property type="match status" value="3"/>
</dbReference>
<dbReference type="PANTHER" id="PTHR31747">
    <property type="entry name" value="PROTEIN LSD1"/>
    <property type="match status" value="1"/>
</dbReference>
<dbReference type="PANTHER" id="PTHR31747:SF3">
    <property type="entry name" value="PROTEIN LSD1"/>
    <property type="match status" value="1"/>
</dbReference>
<dbReference type="Pfam" id="PF06943">
    <property type="entry name" value="zf-LSD1"/>
    <property type="match status" value="3"/>
</dbReference>
<accession>P94077</accession>
<accession>C0Z316</accession>
<accession>Q8RXL2</accession>
<evidence type="ECO:0000255" key="1"/>
<evidence type="ECO:0000256" key="2">
    <source>
        <dbReference type="SAM" id="MobiDB-lite"/>
    </source>
</evidence>
<evidence type="ECO:0000269" key="3">
    <source>
    </source>
</evidence>
<evidence type="ECO:0000269" key="4">
    <source>
    </source>
</evidence>
<evidence type="ECO:0000269" key="5">
    <source>
    </source>
</evidence>
<evidence type="ECO:0000269" key="6">
    <source>
    </source>
</evidence>
<evidence type="ECO:0000269" key="7">
    <source>
    </source>
</evidence>
<evidence type="ECO:0000269" key="8">
    <source>
    </source>
</evidence>
<evidence type="ECO:0000269" key="9">
    <source>
    </source>
</evidence>
<evidence type="ECO:0000269" key="10">
    <source>
    </source>
</evidence>
<evidence type="ECO:0000269" key="11">
    <source>
    </source>
</evidence>
<evidence type="ECO:0000269" key="12">
    <source>
    </source>
</evidence>
<evidence type="ECO:0000269" key="13">
    <source>
    </source>
</evidence>
<evidence type="ECO:0000269" key="14">
    <source>
    </source>
</evidence>
<evidence type="ECO:0000269" key="15">
    <source>
    </source>
</evidence>
<evidence type="ECO:0000269" key="16">
    <source>
    </source>
</evidence>
<evidence type="ECO:0000303" key="17">
    <source>
    </source>
</evidence>
<evidence type="ECO:0000303" key="18">
    <source>
    </source>
</evidence>
<evidence type="ECO:0000303" key="19">
    <source ref="6"/>
</evidence>
<evidence type="ECO:0000305" key="20"/>
<feature type="chain" id="PRO_0000408483" description="Protein LSD1">
    <location>
        <begin position="1"/>
        <end position="189"/>
    </location>
</feature>
<feature type="region of interest" description="LSD1-type zinc-finger" evidence="1">
    <location>
        <begin position="9"/>
        <end position="39"/>
    </location>
</feature>
<feature type="region of interest" description="LSD1-type zinc-finger" evidence="1">
    <location>
        <begin position="50"/>
        <end position="80"/>
    </location>
</feature>
<feature type="region of interest" description="LSD1-type zinc-finger" evidence="1">
    <location>
        <begin position="97"/>
        <end position="127"/>
    </location>
</feature>
<feature type="region of interest" description="Disordered" evidence="2">
    <location>
        <begin position="136"/>
        <end position="159"/>
    </location>
</feature>
<feature type="compositionally biased region" description="Low complexity" evidence="2">
    <location>
        <begin position="147"/>
        <end position="159"/>
    </location>
</feature>
<feature type="splice variant" id="VSP_041104" description="In isoform 2." evidence="17 18 19">
    <location>
        <begin position="1"/>
        <end position="5"/>
    </location>
</feature>
<gene>
    <name type="primary">LSD1</name>
    <name type="synonym">CHS4</name>
    <name type="ordered locus">At4g20380</name>
    <name type="ORF">F9F13.30</name>
</gene>
<protein>
    <recommendedName>
        <fullName>Protein LSD1</fullName>
    </recommendedName>
    <alternativeName>
        <fullName>Protein CHILLING SENSITIVE 4</fullName>
    </alternativeName>
    <alternativeName>
        <fullName>Protein LESION SIMULATING DISEASE 1</fullName>
        <shortName>AtLSD1</shortName>
    </alternativeName>
    <alternativeName>
        <fullName>Putative zinc finger LSD1</fullName>
    </alternativeName>
</protein>